<organism>
    <name type="scientific">Saccharomyces cerevisiae (strain ATCC 204508 / S288c)</name>
    <name type="common">Baker's yeast</name>
    <dbReference type="NCBI Taxonomy" id="559292"/>
    <lineage>
        <taxon>Eukaryota</taxon>
        <taxon>Fungi</taxon>
        <taxon>Dikarya</taxon>
        <taxon>Ascomycota</taxon>
        <taxon>Saccharomycotina</taxon>
        <taxon>Saccharomycetes</taxon>
        <taxon>Saccharomycetales</taxon>
        <taxon>Saccharomycetaceae</taxon>
        <taxon>Saccharomyces</taxon>
    </lineage>
</organism>
<accession>P47101</accession>
<accession>D6VWK3</accession>
<accession>P87321</accession>
<accession>Q05848</accession>
<evidence type="ECO:0000305" key="1"/>
<keyword id="KW-1185">Reference proteome</keyword>
<reference key="1">
    <citation type="journal article" date="1995" name="Yeast">
        <title>The sequence of 24.3 kb from chromosome X reveals five complete open reading frames, all of which correspond to new genes, and a tandem insertion of a Ty1 transposon.</title>
        <authorList>
            <person name="Zagulski M."/>
            <person name="Babinska B."/>
            <person name="Gromadka R."/>
            <person name="Migdalski A."/>
            <person name="Rytka J."/>
            <person name="Sulicka J."/>
            <person name="Herbert C.J."/>
        </authorList>
    </citation>
    <scope>NUCLEOTIDE SEQUENCE [GENOMIC DNA]</scope>
    <source>
        <strain>ATCC 204508 / S288c</strain>
        <strain>VP102-10A</strain>
    </source>
</reference>
<reference key="2">
    <citation type="journal article" date="1996" name="EMBO J.">
        <title>Complete nucleotide sequence of Saccharomyces cerevisiae chromosome X.</title>
        <authorList>
            <person name="Galibert F."/>
            <person name="Alexandraki D."/>
            <person name="Baur A."/>
            <person name="Boles E."/>
            <person name="Chalwatzis N."/>
            <person name="Chuat J.-C."/>
            <person name="Coster F."/>
            <person name="Cziepluch C."/>
            <person name="de Haan M."/>
            <person name="Domdey H."/>
            <person name="Durand P."/>
            <person name="Entian K.-D."/>
            <person name="Gatius M."/>
            <person name="Goffeau A."/>
            <person name="Grivell L.A."/>
            <person name="Hennemann A."/>
            <person name="Herbert C.J."/>
            <person name="Heumann K."/>
            <person name="Hilger F."/>
            <person name="Hollenberg C.P."/>
            <person name="Huang M.-E."/>
            <person name="Jacq C."/>
            <person name="Jauniaux J.-C."/>
            <person name="Katsoulou C."/>
            <person name="Kirchrath L."/>
            <person name="Kleine K."/>
            <person name="Kordes E."/>
            <person name="Koetter P."/>
            <person name="Liebl S."/>
            <person name="Louis E.J."/>
            <person name="Manus V."/>
            <person name="Mewes H.-W."/>
            <person name="Miosga T."/>
            <person name="Obermaier B."/>
            <person name="Perea J."/>
            <person name="Pohl T.M."/>
            <person name="Portetelle D."/>
            <person name="Pujol A."/>
            <person name="Purnelle B."/>
            <person name="Ramezani Rad M."/>
            <person name="Rasmussen S.W."/>
            <person name="Rose M."/>
            <person name="Rossau R."/>
            <person name="Schaaff-Gerstenschlaeger I."/>
            <person name="Smits P.H.M."/>
            <person name="Scarcez T."/>
            <person name="Soriano N."/>
            <person name="To Van D."/>
            <person name="Tzermia M."/>
            <person name="Van Broekhoven A."/>
            <person name="Vandenbol M."/>
            <person name="Wedler H."/>
            <person name="von Wettstein D."/>
            <person name="Wambutt R."/>
            <person name="Zagulski M."/>
            <person name="Zollner A."/>
            <person name="Karpfinger-Hartl L."/>
        </authorList>
    </citation>
    <scope>NUCLEOTIDE SEQUENCE [LARGE SCALE GENOMIC DNA]</scope>
    <source>
        <strain>ATCC 204508 / S288c</strain>
    </source>
</reference>
<reference key="3">
    <citation type="journal article" date="2014" name="G3 (Bethesda)">
        <title>The reference genome sequence of Saccharomyces cerevisiae: Then and now.</title>
        <authorList>
            <person name="Engel S.R."/>
            <person name="Dietrich F.S."/>
            <person name="Fisk D.G."/>
            <person name="Binkley G."/>
            <person name="Balakrishnan R."/>
            <person name="Costanzo M.C."/>
            <person name="Dwight S.S."/>
            <person name="Hitz B.C."/>
            <person name="Karra K."/>
            <person name="Nash R.S."/>
            <person name="Weng S."/>
            <person name="Wong E.D."/>
            <person name="Lloyd P."/>
            <person name="Skrzypek M.S."/>
            <person name="Miyasato S.R."/>
            <person name="Simison M."/>
            <person name="Cherry J.M."/>
        </authorList>
    </citation>
    <scope>GENOME REANNOTATION</scope>
    <source>
        <strain>ATCC 204508 / S288c</strain>
    </source>
</reference>
<sequence>MELFNKEEASFETLLKRLLVVCESHSRYHGSSLDPMVKVGHEMRKISGYLRCILRKHAANHDDMSLTQSIVNSYKSLFKDAQILDLYHNLLFGCMHLLLDANMSYFRMDSQKLFAVLLFKVYYKLRDIFYVTNEVRLGSLISAFVYKFKSCYDFISCNSLKYGSVRDVISGEVSLINLPPIDSNKVINRAYYRLDVKKLAINNKLVEILELDNGEIAIFEVLSEKMPYTLQTIDNLFQSLALGNHDLMNVGRSLLFRPFRSGDLDLIRLDDSGAKLKVPINNSIVLRLTCKDPIQWQEYWKHVIRKLFDSTATKEYKRSGSKISQQVYVRSNNPDYTSPKRNDDMPISSVKISDTIHNGRTLHRSIPLPGSLSSLIETSNEYPDEESLSIMSERATVSEDSDLDTSLKDIESLSCEKLIELDKSIQVPLSPKYMDTPTLKNIRTASQTFSLESVSPELIESVASEIDDSESIISEDGKDKRDKDLFDPDIDFYKPTLYRRKSSSLLSIFSKNKKNLTIDIPKNHSRSLFSLPGNQQSVTPVSATPHDDNVDETYVSFPLSINTSGGAVYFENDSVKVSLWNGKSWVPLSKDMLCLSLILSGDNETLLIVYKDFEKEKCKLVVKLEPTWKYNRSTAQDVQLRIPSSDFKASVFGTLHDLTLSIRCAQAAKLVNVLQYQLQSSQTSSLSPSTTTGTLSTVSSSSCFSRNVTRSSTENSELANMKDSSEYISSSLLLSSVKVRQLRNM</sequence>
<feature type="chain" id="PRO_0000203090" description="UPF0508 protein YJR030C">
    <location>
        <begin position="1"/>
        <end position="745"/>
    </location>
</feature>
<feature type="sequence variant" description="In strain: VP102-10A.">
    <original>LRNM</original>
    <variation>HVKTKADVWKPSRVGYTDIFSQEYKGIVVAIKFVICSDAEGTLYPREYNSRLHDIKRLGRTGLSFTDKKEAYLLEFKNQDVVDHVHKLILPFNTSWQSN</variation>
    <location>
        <begin position="742"/>
        <end position="745"/>
    </location>
</feature>
<dbReference type="EMBL" id="X87297">
    <property type="protein sequence ID" value="CAA60723.1"/>
    <property type="molecule type" value="Genomic_DNA"/>
</dbReference>
<dbReference type="EMBL" id="X87298">
    <property type="protein sequence ID" value="CAA60727.1"/>
    <property type="status" value="ALT_SEQ"/>
    <property type="molecule type" value="Genomic_DNA"/>
</dbReference>
<dbReference type="EMBL" id="Z49530">
    <property type="protein sequence ID" value="CAA89557.1"/>
    <property type="molecule type" value="Genomic_DNA"/>
</dbReference>
<dbReference type="EMBL" id="BK006943">
    <property type="protein sequence ID" value="DAA08819.1"/>
    <property type="molecule type" value="Genomic_DNA"/>
</dbReference>
<dbReference type="PIR" id="S57048">
    <property type="entry name" value="S57048"/>
</dbReference>
<dbReference type="BioGRID" id="33783">
    <property type="interactions" value="12"/>
</dbReference>
<dbReference type="DIP" id="DIP-5695N"/>
<dbReference type="FunCoup" id="P47101">
    <property type="interactions" value="4"/>
</dbReference>
<dbReference type="IntAct" id="P47101">
    <property type="interactions" value="3"/>
</dbReference>
<dbReference type="MINT" id="P47101"/>
<dbReference type="STRING" id="4932.YJR030C"/>
<dbReference type="iPTMnet" id="P47101"/>
<dbReference type="PaxDb" id="4932-YJR030C"/>
<dbReference type="PeptideAtlas" id="P47101"/>
<dbReference type="EnsemblFungi" id="YJR030C_mRNA">
    <property type="protein sequence ID" value="YJR030C"/>
    <property type="gene ID" value="YJR030C"/>
</dbReference>
<dbReference type="KEGG" id="sce:YJR030C"/>
<dbReference type="AGR" id="SGD:S000003791"/>
<dbReference type="SGD" id="S000003791">
    <property type="gene designation" value="YJR030C"/>
</dbReference>
<dbReference type="VEuPathDB" id="FungiDB:YJR030C"/>
<dbReference type="eggNOG" id="ENOG502QTEC">
    <property type="taxonomic scope" value="Eukaryota"/>
</dbReference>
<dbReference type="GeneTree" id="ENSGT00940000176640"/>
<dbReference type="HOGENOM" id="CLU_338632_0_0_1"/>
<dbReference type="InParanoid" id="P47101"/>
<dbReference type="OMA" id="LVVCESH"/>
<dbReference type="OrthoDB" id="4035999at2759"/>
<dbReference type="BioCyc" id="YEAST:G3O-31668-MONOMER"/>
<dbReference type="BioGRID-ORCS" id="853487">
    <property type="hits" value="0 hits in 10 CRISPR screens"/>
</dbReference>
<dbReference type="ChiTaRS" id="RBH2">
    <property type="organism name" value="yeast"/>
</dbReference>
<dbReference type="PRO" id="PR:P47101"/>
<dbReference type="Proteomes" id="UP000002311">
    <property type="component" value="Chromosome X"/>
</dbReference>
<dbReference type="RNAct" id="P47101">
    <property type="molecule type" value="protein"/>
</dbReference>
<dbReference type="GO" id="GO:0019320">
    <property type="term" value="P:hexose catabolic process"/>
    <property type="evidence" value="ECO:0000315"/>
    <property type="project" value="SGD"/>
</dbReference>
<protein>
    <recommendedName>
        <fullName>UPF0508 protein YJR030C</fullName>
    </recommendedName>
</protein>
<comment type="similarity">
    <text evidence="1">Belongs to the UPF0508 family.</text>
</comment>
<comment type="caution">
    <text evidence="1">This is a truncated version of an UPF0508 family protein. Strain S288c has a tandem insertion of a Ty1 transposon in position 742, which disrupts the gene coding for this protein and produces two ORFs YJR030C and YJR025C-A. A contiguous sequence of this protein can be found in strain YJM789 (AC A6ZPZ1).</text>
</comment>
<comment type="sequence caution" evidence="1">
    <conflict type="miscellaneous discrepancy">
        <sequence resource="EMBL-CDS" id="CAA60727"/>
    </conflict>
    <text>Contains PCR fragment of strain VP102-10A.</text>
</comment>
<proteinExistence type="inferred from homology"/>
<gene>
    <name type="ordered locus">YJR030C</name>
    <name type="ORF">J1575L</name>
</gene>
<name>YJ00_YEAST</name>